<proteinExistence type="inferred from homology"/>
<gene>
    <name evidence="1" type="primary">uvrC</name>
    <name type="ordered locus">HPP12_0828</name>
</gene>
<dbReference type="EMBL" id="CP001217">
    <property type="protein sequence ID" value="ACJ07980.1"/>
    <property type="molecule type" value="Genomic_DNA"/>
</dbReference>
<dbReference type="SMR" id="B6JM52"/>
<dbReference type="KEGG" id="hpp:HPP12_0828"/>
<dbReference type="HOGENOM" id="CLU_014841_3_2_7"/>
<dbReference type="Proteomes" id="UP000008198">
    <property type="component" value="Chromosome"/>
</dbReference>
<dbReference type="GO" id="GO:0005737">
    <property type="term" value="C:cytoplasm"/>
    <property type="evidence" value="ECO:0007669"/>
    <property type="project" value="UniProtKB-SubCell"/>
</dbReference>
<dbReference type="GO" id="GO:0009380">
    <property type="term" value="C:excinuclease repair complex"/>
    <property type="evidence" value="ECO:0007669"/>
    <property type="project" value="InterPro"/>
</dbReference>
<dbReference type="GO" id="GO:0003677">
    <property type="term" value="F:DNA binding"/>
    <property type="evidence" value="ECO:0007669"/>
    <property type="project" value="UniProtKB-UniRule"/>
</dbReference>
<dbReference type="GO" id="GO:0009381">
    <property type="term" value="F:excinuclease ABC activity"/>
    <property type="evidence" value="ECO:0007669"/>
    <property type="project" value="UniProtKB-UniRule"/>
</dbReference>
<dbReference type="GO" id="GO:0006289">
    <property type="term" value="P:nucleotide-excision repair"/>
    <property type="evidence" value="ECO:0007669"/>
    <property type="project" value="UniProtKB-UniRule"/>
</dbReference>
<dbReference type="GO" id="GO:0009432">
    <property type="term" value="P:SOS response"/>
    <property type="evidence" value="ECO:0007669"/>
    <property type="project" value="UniProtKB-UniRule"/>
</dbReference>
<dbReference type="CDD" id="cd10434">
    <property type="entry name" value="GIY-YIG_UvrC_Cho"/>
    <property type="match status" value="1"/>
</dbReference>
<dbReference type="FunFam" id="3.40.1440.10:FF:000001">
    <property type="entry name" value="UvrABC system protein C"/>
    <property type="match status" value="1"/>
</dbReference>
<dbReference type="Gene3D" id="1.10.150.20">
    <property type="entry name" value="5' to 3' exonuclease, C-terminal subdomain"/>
    <property type="match status" value="1"/>
</dbReference>
<dbReference type="Gene3D" id="3.40.1440.10">
    <property type="entry name" value="GIY-YIG endonuclease"/>
    <property type="match status" value="1"/>
</dbReference>
<dbReference type="Gene3D" id="4.10.860.10">
    <property type="entry name" value="UVR domain"/>
    <property type="match status" value="1"/>
</dbReference>
<dbReference type="Gene3D" id="3.30.420.340">
    <property type="entry name" value="UvrC, RNAse H endonuclease domain"/>
    <property type="match status" value="1"/>
</dbReference>
<dbReference type="HAMAP" id="MF_00203">
    <property type="entry name" value="UvrC"/>
    <property type="match status" value="1"/>
</dbReference>
<dbReference type="InterPro" id="IPR000305">
    <property type="entry name" value="GIY-YIG_endonuc"/>
</dbReference>
<dbReference type="InterPro" id="IPR035901">
    <property type="entry name" value="GIY-YIG_endonuc_sf"/>
</dbReference>
<dbReference type="InterPro" id="IPR047296">
    <property type="entry name" value="GIY-YIG_UvrC_Cho"/>
</dbReference>
<dbReference type="InterPro" id="IPR010994">
    <property type="entry name" value="RuvA_2-like"/>
</dbReference>
<dbReference type="InterPro" id="IPR001943">
    <property type="entry name" value="UVR_dom"/>
</dbReference>
<dbReference type="InterPro" id="IPR036876">
    <property type="entry name" value="UVR_dom_sf"/>
</dbReference>
<dbReference type="InterPro" id="IPR050066">
    <property type="entry name" value="UvrABC_protein_C"/>
</dbReference>
<dbReference type="InterPro" id="IPR004791">
    <property type="entry name" value="UvrC"/>
</dbReference>
<dbReference type="InterPro" id="IPR001162">
    <property type="entry name" value="UvrC_RNase_H_dom"/>
</dbReference>
<dbReference type="InterPro" id="IPR038476">
    <property type="entry name" value="UvrC_RNase_H_dom_sf"/>
</dbReference>
<dbReference type="NCBIfam" id="TIGR00194">
    <property type="entry name" value="uvrC"/>
    <property type="match status" value="1"/>
</dbReference>
<dbReference type="PANTHER" id="PTHR30562:SF1">
    <property type="entry name" value="UVRABC SYSTEM PROTEIN C"/>
    <property type="match status" value="1"/>
</dbReference>
<dbReference type="PANTHER" id="PTHR30562">
    <property type="entry name" value="UVRC/OXIDOREDUCTASE"/>
    <property type="match status" value="1"/>
</dbReference>
<dbReference type="Pfam" id="PF01541">
    <property type="entry name" value="GIY-YIG"/>
    <property type="match status" value="1"/>
</dbReference>
<dbReference type="Pfam" id="PF02151">
    <property type="entry name" value="UVR"/>
    <property type="match status" value="1"/>
</dbReference>
<dbReference type="Pfam" id="PF22920">
    <property type="entry name" value="UvrC_RNaseH"/>
    <property type="match status" value="1"/>
</dbReference>
<dbReference type="Pfam" id="PF08459">
    <property type="entry name" value="UvrC_RNaseH_dom"/>
    <property type="match status" value="1"/>
</dbReference>
<dbReference type="SMART" id="SM00465">
    <property type="entry name" value="GIYc"/>
    <property type="match status" value="1"/>
</dbReference>
<dbReference type="SUPFAM" id="SSF46600">
    <property type="entry name" value="C-terminal UvrC-binding domain of UvrB"/>
    <property type="match status" value="1"/>
</dbReference>
<dbReference type="SUPFAM" id="SSF82771">
    <property type="entry name" value="GIY-YIG endonuclease"/>
    <property type="match status" value="1"/>
</dbReference>
<dbReference type="SUPFAM" id="SSF47781">
    <property type="entry name" value="RuvA domain 2-like"/>
    <property type="match status" value="1"/>
</dbReference>
<dbReference type="PROSITE" id="PS50164">
    <property type="entry name" value="GIY_YIG"/>
    <property type="match status" value="1"/>
</dbReference>
<dbReference type="PROSITE" id="PS50151">
    <property type="entry name" value="UVR"/>
    <property type="match status" value="1"/>
</dbReference>
<dbReference type="PROSITE" id="PS50165">
    <property type="entry name" value="UVRC"/>
    <property type="match status" value="1"/>
</dbReference>
<keyword id="KW-0963">Cytoplasm</keyword>
<keyword id="KW-0227">DNA damage</keyword>
<keyword id="KW-0228">DNA excision</keyword>
<keyword id="KW-0234">DNA repair</keyword>
<keyword id="KW-0267">Excision nuclease</keyword>
<keyword id="KW-0742">SOS response</keyword>
<feature type="chain" id="PRO_1000099488" description="UvrABC system protein C">
    <location>
        <begin position="1"/>
        <end position="594"/>
    </location>
</feature>
<feature type="domain" description="GIY-YIG" evidence="1">
    <location>
        <begin position="13"/>
        <end position="99"/>
    </location>
</feature>
<feature type="domain" description="UVR" evidence="1">
    <location>
        <begin position="205"/>
        <end position="240"/>
    </location>
</feature>
<sequence length="594" mass="68604">MADLLSSLKNLPNSSGVYQYFDKNRQLLYIGKAKNLKKRIKSYFSIRNNEITPNHRASLRVQMMVKQIAFLETILVENEQDALILENSLIKQLKPKYNILLRDDKTYPYIYMDFSTDFPIPLITRKILKQPGVKYFGPFTSGAKDILDSLYELLPLVQKKNCIKDKKACMFYQIERCKAPCEDKITKEEYLKIAKKCLEMIENKDRLIKELELKMERLSSKLRFEEALIYRDRIAKIQKIAPFTCMDLAKLYDLDIFAFYGTSNKAVLVKMFMRGGKIISSAFEKIHSLNGFDTDEAMKQAIINHYQSHLPLIPEQILLNACSNETLKELQEFISHQYSKKIALSIPKKGDKLALIEIAMKNAQEIFSQEKTSNEDLILEEARSLFKLECMPYRVEIFDTSHHANSQCVGGMVVYENNAFQKNSYRLYHLKGSDEYAQMSELLTRRALDFAKEPPPNLWVIDGGRAQLNIALEILKSSGSFVEVIAISKEKRDSKAYRSKGGAKDIIHTPSDTFKLLPSDKRLQWVQKLRDESHRYAINFHRSTKLKNLKQIALLKEKGIGEASVKKLLDYFGSFEAIEKASEQEKNAVLKKRN</sequence>
<name>UVRC_HELP2</name>
<organism>
    <name type="scientific">Helicobacter pylori (strain P12)</name>
    <dbReference type="NCBI Taxonomy" id="570508"/>
    <lineage>
        <taxon>Bacteria</taxon>
        <taxon>Pseudomonadati</taxon>
        <taxon>Campylobacterota</taxon>
        <taxon>Epsilonproteobacteria</taxon>
        <taxon>Campylobacterales</taxon>
        <taxon>Helicobacteraceae</taxon>
        <taxon>Helicobacter</taxon>
    </lineage>
</organism>
<accession>B6JM52</accession>
<evidence type="ECO:0000255" key="1">
    <source>
        <dbReference type="HAMAP-Rule" id="MF_00203"/>
    </source>
</evidence>
<comment type="function">
    <text evidence="1">The UvrABC repair system catalyzes the recognition and processing of DNA lesions. UvrC both incises the 5' and 3' sides of the lesion. The N-terminal half is responsible for the 3' incision and the C-terminal half is responsible for the 5' incision.</text>
</comment>
<comment type="subunit">
    <text evidence="1">Interacts with UvrB in an incision complex.</text>
</comment>
<comment type="subcellular location">
    <subcellularLocation>
        <location evidence="1">Cytoplasm</location>
    </subcellularLocation>
</comment>
<comment type="similarity">
    <text evidence="1">Belongs to the UvrC family.</text>
</comment>
<protein>
    <recommendedName>
        <fullName evidence="1">UvrABC system protein C</fullName>
        <shortName evidence="1">Protein UvrC</shortName>
    </recommendedName>
    <alternativeName>
        <fullName evidence="1">Excinuclease ABC subunit C</fullName>
    </alternativeName>
</protein>
<reference key="1">
    <citation type="submission" date="2008-10" db="EMBL/GenBank/DDBJ databases">
        <title>The complete genome sequence of Helicobacter pylori strain P12.</title>
        <authorList>
            <person name="Fischer W."/>
            <person name="Windhager L."/>
            <person name="Karnholz A."/>
            <person name="Zeiller M."/>
            <person name="Zimmer R."/>
            <person name="Haas R."/>
        </authorList>
    </citation>
    <scope>NUCLEOTIDE SEQUENCE [LARGE SCALE GENOMIC DNA]</scope>
    <source>
        <strain>P12</strain>
    </source>
</reference>